<sequence>MAGDESRSNPFSRRTLLRTSAAAGAGLGVAGLSTGYGAAQPVRPAKGESMMGVAFEAHETVRVGIIGVGNRGASMLPLFLAVPGVAITAVCDVSADAVNRAARAVTDAGHPEPAKYSAGEDDFENLLRRDDVDFAYVATPWEWHTPMALSAMRNGKHVGVECPAGTTVDELWELVDTSEKTRRHCIQLENCSYSQNEMRVLRMVHDGLFGQVLFGAGAYLHDLRELLFSKTYYAGQWRRAWHTGLNGDLYPTHGLGPVAAYMDINRGDRLVRITSMSTPAAGLAQYREQHMPAGDPTWNERYVKGDATISLIQTEAGRVVQLAHDVSNPRPYSRLNQLQGTNGVFEDYPARIYLEPTHSNDEWGDFAEFADYDHWLWKEVGPGPGGHGGMDYIMLYRLAQTMRLGLPPDIDVYDSATWSAPFALSVESVRRNSAPVDFPDFTRGRWQTPHPGVDSPKPA</sequence>
<name>GH109_SACEN</name>
<accession>A4FN60</accession>
<gene>
    <name type="ordered locus">SACE_6314</name>
</gene>
<proteinExistence type="inferred from homology"/>
<comment type="function">
    <text evidence="1">Glycosidase.</text>
</comment>
<comment type="cofactor">
    <cofactor evidence="1">
        <name>NAD(+)</name>
        <dbReference type="ChEBI" id="CHEBI:57540"/>
    </cofactor>
    <text evidence="1">Binds 1 NAD(+) per subunit. The NAD(+) cannot dissociate.</text>
</comment>
<comment type="PTM">
    <text>Predicted to be exported by the Tat system. The position of the signal peptide cleavage has not been experimentally proven.</text>
</comment>
<comment type="similarity">
    <text evidence="4">Belongs to the Gfo/Idh/MocA family. Glycosyl hydrolase 109 subfamily.</text>
</comment>
<dbReference type="EC" id="3.2.1.-"/>
<dbReference type="EMBL" id="AM420293">
    <property type="protein sequence ID" value="CAM05485.1"/>
    <property type="molecule type" value="Genomic_DNA"/>
</dbReference>
<dbReference type="RefSeq" id="WP_009950611.1">
    <property type="nucleotide sequence ID" value="NC_009142.1"/>
</dbReference>
<dbReference type="SMR" id="A4FN60"/>
<dbReference type="STRING" id="405948.SACE_6314"/>
<dbReference type="CAZy" id="GH109">
    <property type="family name" value="Glycoside Hydrolase Family 109"/>
</dbReference>
<dbReference type="KEGG" id="sen:SACE_6314"/>
<dbReference type="eggNOG" id="COG0673">
    <property type="taxonomic scope" value="Bacteria"/>
</dbReference>
<dbReference type="HOGENOM" id="CLU_046965_0_0_11"/>
<dbReference type="OrthoDB" id="9771072at2"/>
<dbReference type="Proteomes" id="UP000006728">
    <property type="component" value="Chromosome"/>
</dbReference>
<dbReference type="GO" id="GO:0016798">
    <property type="term" value="F:hydrolase activity, acting on glycosyl bonds"/>
    <property type="evidence" value="ECO:0007669"/>
    <property type="project" value="UniProtKB-KW"/>
</dbReference>
<dbReference type="GO" id="GO:0000166">
    <property type="term" value="F:nucleotide binding"/>
    <property type="evidence" value="ECO:0007669"/>
    <property type="project" value="InterPro"/>
</dbReference>
<dbReference type="Gene3D" id="3.30.360.10">
    <property type="entry name" value="Dihydrodipicolinate Reductase, domain 2"/>
    <property type="match status" value="1"/>
</dbReference>
<dbReference type="Gene3D" id="3.40.50.720">
    <property type="entry name" value="NAD(P)-binding Rossmann-like Domain"/>
    <property type="match status" value="1"/>
</dbReference>
<dbReference type="InterPro" id="IPR000683">
    <property type="entry name" value="Gfo/Idh/MocA-like_OxRdtase_N"/>
</dbReference>
<dbReference type="InterPro" id="IPR050463">
    <property type="entry name" value="Gfo/Idh/MocA_oxidrdct_glycsds"/>
</dbReference>
<dbReference type="InterPro" id="IPR049303">
    <property type="entry name" value="Glyco_hydro_109_C"/>
</dbReference>
<dbReference type="InterPro" id="IPR036291">
    <property type="entry name" value="NAD(P)-bd_dom_sf"/>
</dbReference>
<dbReference type="InterPro" id="IPR006311">
    <property type="entry name" value="TAT_signal"/>
</dbReference>
<dbReference type="PANTHER" id="PTHR43818">
    <property type="entry name" value="BCDNA.GH03377"/>
    <property type="match status" value="1"/>
</dbReference>
<dbReference type="PANTHER" id="PTHR43818:SF1">
    <property type="entry name" value="GLYCOSYL HYDROLASE FAMILY 109 PROTEIN"/>
    <property type="match status" value="1"/>
</dbReference>
<dbReference type="Pfam" id="PF01408">
    <property type="entry name" value="GFO_IDH_MocA"/>
    <property type="match status" value="1"/>
</dbReference>
<dbReference type="Pfam" id="PF21252">
    <property type="entry name" value="Glyco_hydro_109_C"/>
    <property type="match status" value="1"/>
</dbReference>
<dbReference type="SUPFAM" id="SSF51735">
    <property type="entry name" value="NAD(P)-binding Rossmann-fold domains"/>
    <property type="match status" value="1"/>
</dbReference>
<dbReference type="PROSITE" id="PS51318">
    <property type="entry name" value="TAT"/>
    <property type="match status" value="1"/>
</dbReference>
<keyword id="KW-0326">Glycosidase</keyword>
<keyword id="KW-0378">Hydrolase</keyword>
<keyword id="KW-0520">NAD</keyword>
<keyword id="KW-1185">Reference proteome</keyword>
<keyword id="KW-0732">Signal</keyword>
<organism>
    <name type="scientific">Saccharopolyspora erythraea (strain ATCC 11635 / DSM 40517 / JCM 4748 / NBRC 13426 / NCIMB 8594 / NRRL 2338)</name>
    <dbReference type="NCBI Taxonomy" id="405948"/>
    <lineage>
        <taxon>Bacteria</taxon>
        <taxon>Bacillati</taxon>
        <taxon>Actinomycetota</taxon>
        <taxon>Actinomycetes</taxon>
        <taxon>Pseudonocardiales</taxon>
        <taxon>Pseudonocardiaceae</taxon>
        <taxon>Saccharopolyspora</taxon>
    </lineage>
</organism>
<protein>
    <recommendedName>
        <fullName>Glycosyl hydrolase family 109 protein</fullName>
        <ecNumber>3.2.1.-</ecNumber>
    </recommendedName>
</protein>
<evidence type="ECO:0000250" key="1"/>
<evidence type="ECO:0000255" key="2">
    <source>
        <dbReference type="PROSITE-ProRule" id="PRU00648"/>
    </source>
</evidence>
<evidence type="ECO:0000256" key="3">
    <source>
        <dbReference type="SAM" id="MobiDB-lite"/>
    </source>
</evidence>
<evidence type="ECO:0000305" key="4"/>
<feature type="signal peptide" description="Tat-type signal" evidence="2">
    <location>
        <begin position="1"/>
        <end position="45"/>
    </location>
</feature>
<feature type="chain" id="PRO_0000348560" description="Glycosyl hydrolase family 109 protein">
    <location>
        <begin position="46"/>
        <end position="459"/>
    </location>
</feature>
<feature type="region of interest" description="Disordered" evidence="3">
    <location>
        <begin position="440"/>
        <end position="459"/>
    </location>
</feature>
<feature type="binding site" evidence="1">
    <location>
        <begin position="70"/>
        <end position="71"/>
    </location>
    <ligand>
        <name>NAD(+)</name>
        <dbReference type="ChEBI" id="CHEBI:57540"/>
    </ligand>
</feature>
<feature type="binding site" evidence="1">
    <location>
        <position position="92"/>
    </location>
    <ligand>
        <name>NAD(+)</name>
        <dbReference type="ChEBI" id="CHEBI:57540"/>
    </ligand>
</feature>
<feature type="binding site" evidence="1">
    <location>
        <begin position="141"/>
        <end position="144"/>
    </location>
    <ligand>
        <name>NAD(+)</name>
        <dbReference type="ChEBI" id="CHEBI:57540"/>
    </ligand>
</feature>
<feature type="binding site" evidence="1">
    <location>
        <begin position="161"/>
        <end position="162"/>
    </location>
    <ligand>
        <name>NAD(+)</name>
        <dbReference type="ChEBI" id="CHEBI:57540"/>
    </ligand>
</feature>
<feature type="binding site" evidence="1">
    <location>
        <position position="190"/>
    </location>
    <ligand>
        <name>NAD(+)</name>
        <dbReference type="ChEBI" id="CHEBI:57540"/>
    </ligand>
</feature>
<feature type="binding site" evidence="1">
    <location>
        <position position="219"/>
    </location>
    <ligand>
        <name>substrate</name>
    </ligand>
</feature>
<feature type="binding site" evidence="1">
    <location>
        <position position="238"/>
    </location>
    <ligand>
        <name>substrate</name>
    </ligand>
</feature>
<feature type="binding site" evidence="1">
    <location>
        <begin position="250"/>
        <end position="253"/>
    </location>
    <ligand>
        <name>substrate</name>
    </ligand>
</feature>
<feature type="binding site" evidence="1">
    <location>
        <position position="250"/>
    </location>
    <ligand>
        <name>NAD(+)</name>
        <dbReference type="ChEBI" id="CHEBI:57540"/>
    </ligand>
</feature>
<feature type="binding site" evidence="1">
    <location>
        <position position="332"/>
    </location>
    <ligand>
        <name>substrate</name>
    </ligand>
</feature>
<reference key="1">
    <citation type="journal article" date="2007" name="Nat. Biotechnol.">
        <title>Complete genome sequence of the erythromycin-producing bacterium Saccharopolyspora erythraea NRRL23338.</title>
        <authorList>
            <person name="Oliynyk M."/>
            <person name="Samborskyy M."/>
            <person name="Lester J.B."/>
            <person name="Mironenko T."/>
            <person name="Scott N."/>
            <person name="Dickens S."/>
            <person name="Haydock S.F."/>
            <person name="Leadlay P.F."/>
        </authorList>
    </citation>
    <scope>NUCLEOTIDE SEQUENCE [LARGE SCALE GENOMIC DNA]</scope>
    <source>
        <strain>ATCC 11635 / DSM 40517 / JCM 4748 / NBRC 13426 / NCIMB 8594 / NRRL 2338</strain>
    </source>
</reference>